<name>JADE1_XENLA</name>
<dbReference type="EMBL" id="BC072750">
    <property type="protein sequence ID" value="AAH72750.1"/>
    <property type="molecule type" value="mRNA"/>
</dbReference>
<dbReference type="RefSeq" id="NP_001085440.1">
    <property type="nucleotide sequence ID" value="NM_001091971.1"/>
</dbReference>
<dbReference type="SMR" id="Q6GQJ2"/>
<dbReference type="DNASU" id="443866"/>
<dbReference type="GeneID" id="443866"/>
<dbReference type="KEGG" id="xla:443866"/>
<dbReference type="AGR" id="Xenbase:XB-GENE-949218"/>
<dbReference type="CTD" id="443866"/>
<dbReference type="Xenbase" id="XB-GENE-949218">
    <property type="gene designation" value="jade1.S"/>
</dbReference>
<dbReference type="OrthoDB" id="20839at2759"/>
<dbReference type="Proteomes" id="UP000186698">
    <property type="component" value="Chromosome 1S"/>
</dbReference>
<dbReference type="Bgee" id="443866">
    <property type="expression patterns" value="Expressed in pancreas and 18 other cell types or tissues"/>
</dbReference>
<dbReference type="GO" id="GO:0042995">
    <property type="term" value="C:cell projection"/>
    <property type="evidence" value="ECO:0007669"/>
    <property type="project" value="UniProtKB-KW"/>
</dbReference>
<dbReference type="GO" id="GO:0005737">
    <property type="term" value="C:cytoplasm"/>
    <property type="evidence" value="ECO:0007669"/>
    <property type="project" value="UniProtKB-SubCell"/>
</dbReference>
<dbReference type="GO" id="GO:0005856">
    <property type="term" value="C:cytoskeleton"/>
    <property type="evidence" value="ECO:0007669"/>
    <property type="project" value="UniProtKB-KW"/>
</dbReference>
<dbReference type="GO" id="GO:0000123">
    <property type="term" value="C:histone acetyltransferase complex"/>
    <property type="evidence" value="ECO:0000318"/>
    <property type="project" value="GO_Central"/>
</dbReference>
<dbReference type="GO" id="GO:0005634">
    <property type="term" value="C:nucleus"/>
    <property type="evidence" value="ECO:0007669"/>
    <property type="project" value="UniProtKB-SubCell"/>
</dbReference>
<dbReference type="GO" id="GO:0008270">
    <property type="term" value="F:zinc ion binding"/>
    <property type="evidence" value="ECO:0007669"/>
    <property type="project" value="UniProtKB-KW"/>
</dbReference>
<dbReference type="GO" id="GO:0006915">
    <property type="term" value="P:apoptotic process"/>
    <property type="evidence" value="ECO:0007669"/>
    <property type="project" value="UniProtKB-KW"/>
</dbReference>
<dbReference type="GO" id="GO:0006357">
    <property type="term" value="P:regulation of transcription by RNA polymerase II"/>
    <property type="evidence" value="ECO:0000318"/>
    <property type="project" value="GO_Central"/>
</dbReference>
<dbReference type="CDD" id="cd15704">
    <property type="entry name" value="ePHD_JADE1"/>
    <property type="match status" value="1"/>
</dbReference>
<dbReference type="CDD" id="cd15679">
    <property type="entry name" value="PHD_JADE1"/>
    <property type="match status" value="1"/>
</dbReference>
<dbReference type="FunFam" id="3.30.40.10:FF:000004">
    <property type="entry name" value="Jade family PHD finger 2"/>
    <property type="match status" value="1"/>
</dbReference>
<dbReference type="FunFam" id="3.30.40.10:FF:000030">
    <property type="entry name" value="Protein Jade-1 isoform 1"/>
    <property type="match status" value="1"/>
</dbReference>
<dbReference type="Gene3D" id="3.30.40.10">
    <property type="entry name" value="Zinc/RING finger domain, C3HC4 (zinc finger)"/>
    <property type="match status" value="2"/>
</dbReference>
<dbReference type="InterPro" id="IPR019542">
    <property type="entry name" value="Enhancer_polycomb-like_N"/>
</dbReference>
<dbReference type="InterPro" id="IPR034732">
    <property type="entry name" value="EPHD"/>
</dbReference>
<dbReference type="InterPro" id="IPR050701">
    <property type="entry name" value="Histone_Mod_Regulator"/>
</dbReference>
<dbReference type="InterPro" id="IPR039546">
    <property type="entry name" value="Jade-1_PHD"/>
</dbReference>
<dbReference type="InterPro" id="IPR019786">
    <property type="entry name" value="Zinc_finger_PHD-type_CS"/>
</dbReference>
<dbReference type="InterPro" id="IPR011011">
    <property type="entry name" value="Znf_FYVE_PHD"/>
</dbReference>
<dbReference type="InterPro" id="IPR001965">
    <property type="entry name" value="Znf_PHD"/>
</dbReference>
<dbReference type="InterPro" id="IPR019787">
    <property type="entry name" value="Znf_PHD-finger"/>
</dbReference>
<dbReference type="InterPro" id="IPR013083">
    <property type="entry name" value="Znf_RING/FYVE/PHD"/>
</dbReference>
<dbReference type="PANTHER" id="PTHR13793">
    <property type="entry name" value="PHD FINGER PROTEINS"/>
    <property type="match status" value="1"/>
</dbReference>
<dbReference type="PANTHER" id="PTHR13793:SF79">
    <property type="entry name" value="PROTEIN JADE-1"/>
    <property type="match status" value="1"/>
</dbReference>
<dbReference type="Pfam" id="PF10513">
    <property type="entry name" value="EPL1"/>
    <property type="match status" value="1"/>
</dbReference>
<dbReference type="Pfam" id="PF13831">
    <property type="entry name" value="PHD_2"/>
    <property type="match status" value="1"/>
</dbReference>
<dbReference type="Pfam" id="PF13832">
    <property type="entry name" value="zf-HC5HC2H_2"/>
    <property type="match status" value="1"/>
</dbReference>
<dbReference type="SMART" id="SM00249">
    <property type="entry name" value="PHD"/>
    <property type="match status" value="2"/>
</dbReference>
<dbReference type="SUPFAM" id="SSF57903">
    <property type="entry name" value="FYVE/PHD zinc finger"/>
    <property type="match status" value="1"/>
</dbReference>
<dbReference type="PROSITE" id="PS51805">
    <property type="entry name" value="EPHD"/>
    <property type="match status" value="1"/>
</dbReference>
<dbReference type="PROSITE" id="PS01359">
    <property type="entry name" value="ZF_PHD_1"/>
    <property type="match status" value="1"/>
</dbReference>
<dbReference type="PROSITE" id="PS50016">
    <property type="entry name" value="ZF_PHD_2"/>
    <property type="match status" value="1"/>
</dbReference>
<comment type="function">
    <text evidence="2">Scaffold subunit of some HBO1 complexes, which have a histone H4 acetyltransferase activity. Plays a key role in HBO1 complex by directing KAT7/HBO1 specificity towards histone H4 acetylation (H4K5ac, H4K8ac and H4K12ac), regulating DNA replication initiation, regulating DNA replication initiation.</text>
</comment>
<comment type="subunit">
    <text evidence="2">Component of the HBO1 complex composed.</text>
</comment>
<comment type="subcellular location">
    <subcellularLocation>
        <location evidence="2">Nucleus</location>
    </subcellularLocation>
    <subcellularLocation>
        <location evidence="2">Chromosome</location>
    </subcellularLocation>
    <subcellularLocation>
        <location evidence="2">Cytoplasm</location>
    </subcellularLocation>
    <subcellularLocation>
        <location evidence="2">Cytoplasm</location>
        <location evidence="2">Cytoskeleton</location>
        <location evidence="2">Cilium basal body</location>
    </subcellularLocation>
    <text evidence="2">Localizes to the ciliary transition zone.</text>
</comment>
<comment type="domain">
    <text evidence="1">The 2 PHD-type zinc fingers are required for transcriptional activity.</text>
</comment>
<comment type="similarity">
    <text evidence="6">Belongs to the JADE family.</text>
</comment>
<protein>
    <recommendedName>
        <fullName>Protein Jade-1</fullName>
    </recommendedName>
    <alternativeName>
        <fullName>Jade family PHD finger protein 1</fullName>
    </alternativeName>
    <alternativeName>
        <fullName>PHD finger protein 17</fullName>
    </alternativeName>
</protein>
<proteinExistence type="evidence at transcript level"/>
<feature type="chain" id="PRO_0000253532" description="Protein Jade-1">
    <location>
        <begin position="1"/>
        <end position="827"/>
    </location>
</feature>
<feature type="zinc finger region" description="PHD-type 1" evidence="3">
    <location>
        <begin position="200"/>
        <end position="250"/>
    </location>
</feature>
<feature type="zinc finger region" description="C2HC pre-PHD-type" evidence="4">
    <location>
        <begin position="252"/>
        <end position="286"/>
    </location>
</feature>
<feature type="zinc finger region" description="PHD-type 2" evidence="4">
    <location>
        <begin position="310"/>
        <end position="366"/>
    </location>
</feature>
<feature type="region of interest" description="Disordered" evidence="5">
    <location>
        <begin position="1"/>
        <end position="35"/>
    </location>
</feature>
<feature type="region of interest" description="Disordered" evidence="5">
    <location>
        <begin position="622"/>
        <end position="705"/>
    </location>
</feature>
<feature type="region of interest" description="Disordered" evidence="5">
    <location>
        <begin position="769"/>
        <end position="810"/>
    </location>
</feature>
<feature type="compositionally biased region" description="Polar residues" evidence="5">
    <location>
        <begin position="16"/>
        <end position="30"/>
    </location>
</feature>
<feature type="compositionally biased region" description="Basic and acidic residues" evidence="5">
    <location>
        <begin position="646"/>
        <end position="661"/>
    </location>
</feature>
<feature type="compositionally biased region" description="Basic and acidic residues" evidence="5">
    <location>
        <begin position="669"/>
        <end position="682"/>
    </location>
</feature>
<feature type="compositionally biased region" description="Polar residues" evidence="5">
    <location>
        <begin position="692"/>
        <end position="705"/>
    </location>
</feature>
<keyword id="KW-0010">Activator</keyword>
<keyword id="KW-0053">Apoptosis</keyword>
<keyword id="KW-0966">Cell projection</keyword>
<keyword id="KW-0158">Chromosome</keyword>
<keyword id="KW-0963">Cytoplasm</keyword>
<keyword id="KW-0206">Cytoskeleton</keyword>
<keyword id="KW-0479">Metal-binding</keyword>
<keyword id="KW-0539">Nucleus</keyword>
<keyword id="KW-1185">Reference proteome</keyword>
<keyword id="KW-0677">Repeat</keyword>
<keyword id="KW-0804">Transcription</keyword>
<keyword id="KW-0805">Transcription regulation</keyword>
<keyword id="KW-0862">Zinc</keyword>
<keyword id="KW-0863">Zinc-finger</keyword>
<gene>
    <name type="primary">jade1</name>
    <name type="synonym">phf17</name>
</gene>
<sequence length="827" mass="94392">MKRVCLPSSSEDSDDNGSLSTSWSQHSRSLPSFRHEDRKPSEVFRTDLITAMKLHDSNQLNPEDYYVLADPWRQEWEKGVQVPVNPEFIPETIARVIAEKDKVVTFTRPRKYIHSSGSEPPEVGYVDIQTLADAVCRYDLNEMDVAWLQLINEEFKEMGMQQLDEYTMEQVLEEFEKKCYDKMNHAIETEEGLGIEYDEDVVCDVCQSPDGEDGNEMVFCDKCNICVHQACYGILKVPEGSWLCRTCALGVQPKCLLCPKKGGAMKPTRSGTKWVHVSCALWIPEVSIGSPEKMEPITKVSHIPSNRWALLCSLCNEKVGACIQCSIKNCRTAFHVTCAFDHGLEMKTILTQEDEVKFKSYCPKHGSTKKPEDSHFCRSASDGKDTCEASPTFLGGLRVLEASQQNVKHGSQRKLKLQQLEDDFYSFVDVHDISQALKIPLDVTEYIYQYWKLRRKANFNEPLITPKKDEEDNLAKKEQDVLIRRLQLFTHLRQDLERVRNLTYMVTRREKMKRSVCRVQEQIFNLYTKISEQEKDLGFPLENGLLFNTQPSNPDAPKIEDLKWHSAFFRKRLGSSLRCSMKDSHKKSRERIIGKSLDTEILLTDRKKEGQTSDVSFPLEKTVAKIKPVQQKNGGSFPEHRKRRDSRTQGDTKFDSKEKPLRQQHRPAKHTEPPERPAEKKRALSQCGGKSATASSNKKQCSSSLPRYSGSLIKIHCNRPSVKVPTSPIKNWGGFRIPKKGEKVQPGSMETCQPNLNCQFLGQVSKKGRTKEKVKLDNDNDGYTPDAEMSDSESEPTDKCRLQRLTSSSSLSRGYETDFIRRSILAS</sequence>
<evidence type="ECO:0000250" key="1"/>
<evidence type="ECO:0000250" key="2">
    <source>
        <dbReference type="UniProtKB" id="Q6IE81"/>
    </source>
</evidence>
<evidence type="ECO:0000255" key="3">
    <source>
        <dbReference type="PROSITE-ProRule" id="PRU00146"/>
    </source>
</evidence>
<evidence type="ECO:0000255" key="4">
    <source>
        <dbReference type="PROSITE-ProRule" id="PRU01146"/>
    </source>
</evidence>
<evidence type="ECO:0000256" key="5">
    <source>
        <dbReference type="SAM" id="MobiDB-lite"/>
    </source>
</evidence>
<evidence type="ECO:0000305" key="6"/>
<accession>Q6GQJ2</accession>
<reference key="1">
    <citation type="submission" date="2004-06" db="EMBL/GenBank/DDBJ databases">
        <authorList>
            <consortium name="NIH - Xenopus Gene Collection (XGC) project"/>
        </authorList>
    </citation>
    <scope>NUCLEOTIDE SEQUENCE [LARGE SCALE MRNA]</scope>
    <source>
        <tissue>Ovary</tissue>
    </source>
</reference>
<organism>
    <name type="scientific">Xenopus laevis</name>
    <name type="common">African clawed frog</name>
    <dbReference type="NCBI Taxonomy" id="8355"/>
    <lineage>
        <taxon>Eukaryota</taxon>
        <taxon>Metazoa</taxon>
        <taxon>Chordata</taxon>
        <taxon>Craniata</taxon>
        <taxon>Vertebrata</taxon>
        <taxon>Euteleostomi</taxon>
        <taxon>Amphibia</taxon>
        <taxon>Batrachia</taxon>
        <taxon>Anura</taxon>
        <taxon>Pipoidea</taxon>
        <taxon>Pipidae</taxon>
        <taxon>Xenopodinae</taxon>
        <taxon>Xenopus</taxon>
        <taxon>Xenopus</taxon>
    </lineage>
</organism>